<gene>
    <name evidence="1" type="primary">radA</name>
    <name type="ordered locus">RC0810</name>
</gene>
<sequence>MTKKHYICSNCGNISPKWSGQCFDCGVWGSIVEEIISTNQVIVKVGSKQDFDKLSGHVTEQLRIPTPIGEFNRVLGGGLVLGSAILIGGDPGIGKSTLLLQLAASNFASKMNCLYITGEESLDQIKLRAIRLNLTNYNTDILAATNLENIIASIEANKNNIDLIVIDSIQTITTKELSSPPGTVSQIRTCANELVNYAKQNNIIILLSCHVTKDGQLAGPKILEHLVDTVLYFEGDHNNHFRILRSYKNRFGGVGEIGVFEMSGSGLIEVTNPSELFLMQREQNVIGTSIFAGIEGSRPLLMEVQALMVPSNMVTPRRSAVGWDANRLSMILAVLSSRIGLNLANYEVYLSIAGGLKIADPASDLAVTASLISAATGNPVPEHSVFFGEISLSGEIRKTAKAETRIKEAVKLGFNKIICSKFENLTYDFISSVSHLKDLKEIIK</sequence>
<organism>
    <name type="scientific">Rickettsia conorii (strain ATCC VR-613 / Malish 7)</name>
    <dbReference type="NCBI Taxonomy" id="272944"/>
    <lineage>
        <taxon>Bacteria</taxon>
        <taxon>Pseudomonadati</taxon>
        <taxon>Pseudomonadota</taxon>
        <taxon>Alphaproteobacteria</taxon>
        <taxon>Rickettsiales</taxon>
        <taxon>Rickettsiaceae</taxon>
        <taxon>Rickettsieae</taxon>
        <taxon>Rickettsia</taxon>
        <taxon>spotted fever group</taxon>
    </lineage>
</organism>
<protein>
    <recommendedName>
        <fullName evidence="1">DNA repair protein RadA</fullName>
        <ecNumber evidence="1">3.6.4.-</ecNumber>
    </recommendedName>
    <alternativeName>
        <fullName evidence="1">Branch migration protein RadA</fullName>
    </alternativeName>
</protein>
<keyword id="KW-0067">ATP-binding</keyword>
<keyword id="KW-0227">DNA damage</keyword>
<keyword id="KW-0234">DNA repair</keyword>
<keyword id="KW-0238">DNA-binding</keyword>
<keyword id="KW-0378">Hydrolase</keyword>
<keyword id="KW-0479">Metal-binding</keyword>
<keyword id="KW-0547">Nucleotide-binding</keyword>
<keyword id="KW-0346">Stress response</keyword>
<keyword id="KW-0862">Zinc</keyword>
<keyword id="KW-0863">Zinc-finger</keyword>
<dbReference type="EC" id="3.6.4.-" evidence="1"/>
<dbReference type="EMBL" id="AE006914">
    <property type="protein sequence ID" value="AAL03348.1"/>
    <property type="molecule type" value="Genomic_DNA"/>
</dbReference>
<dbReference type="PIR" id="B97801">
    <property type="entry name" value="B97801"/>
</dbReference>
<dbReference type="RefSeq" id="WP_010977421.1">
    <property type="nucleotide sequence ID" value="NC_003103.1"/>
</dbReference>
<dbReference type="SMR" id="Q92HG1"/>
<dbReference type="MEROPS" id="S16.A04"/>
<dbReference type="GeneID" id="927754"/>
<dbReference type="KEGG" id="rco:RC0810"/>
<dbReference type="PATRIC" id="fig|272944.4.peg.920"/>
<dbReference type="HOGENOM" id="CLU_018264_0_1_5"/>
<dbReference type="Proteomes" id="UP000000816">
    <property type="component" value="Chromosome"/>
</dbReference>
<dbReference type="GO" id="GO:0005829">
    <property type="term" value="C:cytosol"/>
    <property type="evidence" value="ECO:0007669"/>
    <property type="project" value="TreeGrafter"/>
</dbReference>
<dbReference type="GO" id="GO:0005524">
    <property type="term" value="F:ATP binding"/>
    <property type="evidence" value="ECO:0007669"/>
    <property type="project" value="UniProtKB-UniRule"/>
</dbReference>
<dbReference type="GO" id="GO:0016887">
    <property type="term" value="F:ATP hydrolysis activity"/>
    <property type="evidence" value="ECO:0007669"/>
    <property type="project" value="InterPro"/>
</dbReference>
<dbReference type="GO" id="GO:0140664">
    <property type="term" value="F:ATP-dependent DNA damage sensor activity"/>
    <property type="evidence" value="ECO:0007669"/>
    <property type="project" value="InterPro"/>
</dbReference>
<dbReference type="GO" id="GO:0003684">
    <property type="term" value="F:damaged DNA binding"/>
    <property type="evidence" value="ECO:0007669"/>
    <property type="project" value="InterPro"/>
</dbReference>
<dbReference type="GO" id="GO:0008270">
    <property type="term" value="F:zinc ion binding"/>
    <property type="evidence" value="ECO:0007669"/>
    <property type="project" value="UniProtKB-KW"/>
</dbReference>
<dbReference type="GO" id="GO:0000725">
    <property type="term" value="P:recombinational repair"/>
    <property type="evidence" value="ECO:0007669"/>
    <property type="project" value="UniProtKB-UniRule"/>
</dbReference>
<dbReference type="CDD" id="cd01121">
    <property type="entry name" value="RadA_SMS_N"/>
    <property type="match status" value="1"/>
</dbReference>
<dbReference type="FunFam" id="3.40.50.300:FF:000050">
    <property type="entry name" value="DNA repair protein RadA"/>
    <property type="match status" value="1"/>
</dbReference>
<dbReference type="Gene3D" id="3.30.230.10">
    <property type="match status" value="1"/>
</dbReference>
<dbReference type="Gene3D" id="3.40.50.300">
    <property type="entry name" value="P-loop containing nucleotide triphosphate hydrolases"/>
    <property type="match status" value="1"/>
</dbReference>
<dbReference type="HAMAP" id="MF_01498">
    <property type="entry name" value="RadA_bact"/>
    <property type="match status" value="1"/>
</dbReference>
<dbReference type="InterPro" id="IPR003593">
    <property type="entry name" value="AAA+_ATPase"/>
</dbReference>
<dbReference type="InterPro" id="IPR004504">
    <property type="entry name" value="DNA_repair_RadA"/>
</dbReference>
<dbReference type="InterPro" id="IPR014774">
    <property type="entry name" value="KaiC-like_dom"/>
</dbReference>
<dbReference type="InterPro" id="IPR027417">
    <property type="entry name" value="P-loop_NTPase"/>
</dbReference>
<dbReference type="InterPro" id="IPR020588">
    <property type="entry name" value="RecA_ATP-bd"/>
</dbReference>
<dbReference type="InterPro" id="IPR020568">
    <property type="entry name" value="Ribosomal_Su5_D2-typ_SF"/>
</dbReference>
<dbReference type="InterPro" id="IPR014721">
    <property type="entry name" value="Ribsml_uS5_D2-typ_fold_subgr"/>
</dbReference>
<dbReference type="InterPro" id="IPR041166">
    <property type="entry name" value="Rubredoxin_2"/>
</dbReference>
<dbReference type="NCBIfam" id="TIGR00416">
    <property type="entry name" value="sms"/>
    <property type="match status" value="1"/>
</dbReference>
<dbReference type="PANTHER" id="PTHR32472">
    <property type="entry name" value="DNA REPAIR PROTEIN RADA"/>
    <property type="match status" value="1"/>
</dbReference>
<dbReference type="PANTHER" id="PTHR32472:SF10">
    <property type="entry name" value="DNA REPAIR PROTEIN RADA-LIKE PROTEIN"/>
    <property type="match status" value="1"/>
</dbReference>
<dbReference type="Pfam" id="PF06745">
    <property type="entry name" value="ATPase"/>
    <property type="match status" value="1"/>
</dbReference>
<dbReference type="Pfam" id="PF13541">
    <property type="entry name" value="ChlI"/>
    <property type="match status" value="1"/>
</dbReference>
<dbReference type="Pfam" id="PF18073">
    <property type="entry name" value="Zn_ribbon_LapB"/>
    <property type="match status" value="1"/>
</dbReference>
<dbReference type="PRINTS" id="PR01874">
    <property type="entry name" value="DNAREPAIRADA"/>
</dbReference>
<dbReference type="SMART" id="SM00382">
    <property type="entry name" value="AAA"/>
    <property type="match status" value="1"/>
</dbReference>
<dbReference type="SUPFAM" id="SSF52540">
    <property type="entry name" value="P-loop containing nucleoside triphosphate hydrolases"/>
    <property type="match status" value="1"/>
</dbReference>
<dbReference type="SUPFAM" id="SSF54211">
    <property type="entry name" value="Ribosomal protein S5 domain 2-like"/>
    <property type="match status" value="1"/>
</dbReference>
<dbReference type="PROSITE" id="PS50162">
    <property type="entry name" value="RECA_2"/>
    <property type="match status" value="1"/>
</dbReference>
<feature type="chain" id="PRO_0000187935" description="DNA repair protein RadA">
    <location>
        <begin position="1"/>
        <end position="444"/>
    </location>
</feature>
<feature type="zinc finger region" description="C4-type" evidence="1">
    <location>
        <begin position="8"/>
        <end position="25"/>
    </location>
</feature>
<feature type="region of interest" description="Lon-protease-like" evidence="1">
    <location>
        <begin position="347"/>
        <end position="444"/>
    </location>
</feature>
<feature type="short sequence motif" description="RadA KNRFG motif" evidence="1">
    <location>
        <begin position="248"/>
        <end position="252"/>
    </location>
</feature>
<feature type="binding site" evidence="1">
    <location>
        <begin position="89"/>
        <end position="96"/>
    </location>
    <ligand>
        <name>ATP</name>
        <dbReference type="ChEBI" id="CHEBI:30616"/>
    </ligand>
</feature>
<comment type="function">
    <text evidence="1">DNA-dependent ATPase involved in processing of recombination intermediates, plays a role in repairing DNA breaks. Stimulates the branch migration of RecA-mediated strand transfer reactions, allowing the 3' invading strand to extend heteroduplex DNA faster. Binds ssDNA in the presence of ADP but not other nucleotides, has ATPase activity that is stimulated by ssDNA and various branched DNA structures, but inhibited by SSB. Does not have RecA's homology-searching function.</text>
</comment>
<comment type="domain">
    <text evidence="1">Has a putative N-terminal zinc-finger, a middle region with homology to RecA with ATPase motifs including the RadA KNRFG motif, while the C-terminus is homologous to Lon protease.</text>
</comment>
<comment type="similarity">
    <text evidence="1">Belongs to the RecA family. RadA subfamily.</text>
</comment>
<accession>Q92HG1</accession>
<name>RADA_RICCN</name>
<reference key="1">
    <citation type="journal article" date="2001" name="Science">
        <title>Mechanisms of evolution in Rickettsia conorii and R. prowazekii.</title>
        <authorList>
            <person name="Ogata H."/>
            <person name="Audic S."/>
            <person name="Renesto-Audiffren P."/>
            <person name="Fournier P.-E."/>
            <person name="Barbe V."/>
            <person name="Samson D."/>
            <person name="Roux V."/>
            <person name="Cossart P."/>
            <person name="Weissenbach J."/>
            <person name="Claverie J.-M."/>
            <person name="Raoult D."/>
        </authorList>
    </citation>
    <scope>NUCLEOTIDE SEQUENCE [LARGE SCALE GENOMIC DNA]</scope>
    <source>
        <strain>ATCC VR-613 / Malish 7</strain>
    </source>
</reference>
<proteinExistence type="inferred from homology"/>
<evidence type="ECO:0000255" key="1">
    <source>
        <dbReference type="HAMAP-Rule" id="MF_01498"/>
    </source>
</evidence>